<keyword id="KW-1072">Activation of host autophagy by virus</keyword>
<keyword id="KW-0106">Calcium</keyword>
<keyword id="KW-0260">Enterotoxin</keyword>
<keyword id="KW-0325">Glycoprotein</keyword>
<keyword id="KW-1038">Host endoplasmic reticulum</keyword>
<keyword id="KW-1043">Host membrane</keyword>
<keyword id="KW-0945">Host-virus interaction</keyword>
<keyword id="KW-0407">Ion channel</keyword>
<keyword id="KW-0406">Ion transport</keyword>
<keyword id="KW-0472">Membrane</keyword>
<keyword id="KW-0479">Metal-binding</keyword>
<keyword id="KW-0964">Secreted</keyword>
<keyword id="KW-0735">Signal-anchor</keyword>
<keyword id="KW-0800">Toxin</keyword>
<keyword id="KW-0812">Transmembrane</keyword>
<keyword id="KW-1133">Transmembrane helix</keyword>
<keyword id="KW-0813">Transport</keyword>
<keyword id="KW-1182">Viral ion channel</keyword>
<keyword id="KW-0843">Virulence</keyword>
<feature type="chain" id="PRO_0000369467" description="Non-structural glycoprotein 4">
    <location>
        <begin position="1"/>
        <end position="175"/>
    </location>
</feature>
<feature type="topological domain" description="Lumenal" evidence="1">
    <location>
        <begin position="1"/>
        <end position="28"/>
    </location>
</feature>
<feature type="transmembrane region" description="Helical; Signal-anchor for type III membrane protein" evidence="1">
    <location>
        <begin position="29"/>
        <end position="51"/>
    </location>
</feature>
<feature type="topological domain" description="Cytoplasmic" evidence="1">
    <location>
        <begin position="52"/>
        <end position="175"/>
    </location>
</feature>
<feature type="binding site" evidence="1">
    <location>
        <position position="120"/>
    </location>
    <ligand>
        <name>Ca(2+)</name>
        <dbReference type="ChEBI" id="CHEBI:29108"/>
    </ligand>
</feature>
<feature type="binding site" evidence="1">
    <location>
        <position position="123"/>
    </location>
    <ligand>
        <name>Ca(2+)</name>
        <dbReference type="ChEBI" id="CHEBI:29108"/>
    </ligand>
</feature>
<feature type="glycosylation site" description="N-linked (GlcNAc...) asparagine; by host" evidence="1">
    <location>
        <position position="8"/>
    </location>
</feature>
<feature type="glycosylation site" description="N-linked (GlcNAc...) asparagine; by host" evidence="1">
    <location>
        <position position="18"/>
    </location>
</feature>
<organism>
    <name type="scientific">Rotavirus A (isolate RVA/Human/Italy/VA70/1975/G4P1A[8])</name>
    <name type="common">RV-A</name>
    <dbReference type="NCBI Taxonomy" id="10961"/>
    <lineage>
        <taxon>Viruses</taxon>
        <taxon>Riboviria</taxon>
        <taxon>Orthornavirae</taxon>
        <taxon>Duplornaviricota</taxon>
        <taxon>Resentoviricetes</taxon>
        <taxon>Reovirales</taxon>
        <taxon>Sedoreoviridae</taxon>
        <taxon>Rotavirus</taxon>
        <taxon>Rotavirus A</taxon>
    </lineage>
</organism>
<accession>O12674</accession>
<name>NSP4_ROTHV</name>
<sequence>MDKLADLNYTLSVITSMNDTLHSIIEDPGMAYFPYIASVLTVLFALHKASIPTMKIALKTSKCSYKVIKYCIVTIINTLLKLVGYKEQVTTKDEIEQQMDRIVKEMRRQLEMIDKLTTREIEQVELLKRIHDNLITRPVDVIDMSKEFNQKNIKTLDEWESRKNPYEPSEVTASM</sequence>
<proteinExistence type="inferred from homology"/>
<protein>
    <recommendedName>
        <fullName evidence="1">Non-structural glycoprotein 4</fullName>
        <shortName evidence="1">NSP4</shortName>
    </recommendedName>
    <alternativeName>
        <fullName evidence="1">NCVP5</fullName>
    </alternativeName>
    <alternativeName>
        <fullName evidence="1">NS28</fullName>
    </alternativeName>
</protein>
<reference key="1">
    <citation type="journal article" date="1997" name="Virology">
        <title>Genetic characterization of the rotavirus nonstructural protein, NSP4.</title>
        <authorList>
            <person name="Kirkwood C.D."/>
            <person name="Palombo E.A."/>
        </authorList>
    </citation>
    <scope>NUCLEOTIDE SEQUENCE [GENOMIC RNA]</scope>
</reference>
<dbReference type="EMBL" id="U83798">
    <property type="protein sequence ID" value="AAB81297.1"/>
    <property type="molecule type" value="Genomic_RNA"/>
</dbReference>
<dbReference type="GO" id="GO:0005576">
    <property type="term" value="C:extracellular region"/>
    <property type="evidence" value="ECO:0007669"/>
    <property type="project" value="UniProtKB-SubCell"/>
</dbReference>
<dbReference type="GO" id="GO:0044155">
    <property type="term" value="C:host caveola"/>
    <property type="evidence" value="ECO:0007669"/>
    <property type="project" value="UniProtKB-SubCell"/>
</dbReference>
<dbReference type="GO" id="GO:0044169">
    <property type="term" value="C:host cell rough endoplasmic reticulum membrane"/>
    <property type="evidence" value="ECO:0007669"/>
    <property type="project" value="UniProtKB-SubCell"/>
</dbReference>
<dbReference type="GO" id="GO:0016020">
    <property type="term" value="C:membrane"/>
    <property type="evidence" value="ECO:0007669"/>
    <property type="project" value="UniProtKB-UniRule"/>
</dbReference>
<dbReference type="GO" id="GO:0015267">
    <property type="term" value="F:channel activity"/>
    <property type="evidence" value="ECO:0007669"/>
    <property type="project" value="UniProtKB-KW"/>
</dbReference>
<dbReference type="GO" id="GO:0046872">
    <property type="term" value="F:metal ion binding"/>
    <property type="evidence" value="ECO:0007669"/>
    <property type="project" value="UniProtKB-UniRule"/>
</dbReference>
<dbReference type="GO" id="GO:0090729">
    <property type="term" value="F:toxin activity"/>
    <property type="evidence" value="ECO:0007669"/>
    <property type="project" value="UniProtKB-UniRule"/>
</dbReference>
<dbReference type="GO" id="GO:0034220">
    <property type="term" value="P:monoatomic ion transmembrane transport"/>
    <property type="evidence" value="ECO:0007669"/>
    <property type="project" value="UniProtKB-KW"/>
</dbReference>
<dbReference type="GO" id="GO:0039520">
    <property type="term" value="P:symbiont-mediated activation of host autophagy"/>
    <property type="evidence" value="ECO:0007669"/>
    <property type="project" value="UniProtKB-KW"/>
</dbReference>
<dbReference type="GO" id="GO:0016032">
    <property type="term" value="P:viral process"/>
    <property type="evidence" value="ECO:0007669"/>
    <property type="project" value="UniProtKB-UniRule"/>
</dbReference>
<dbReference type="Gene3D" id="1.20.5.430">
    <property type="match status" value="1"/>
</dbReference>
<dbReference type="HAMAP" id="MF_04091">
    <property type="entry name" value="ROTA_NSP4"/>
    <property type="match status" value="1"/>
</dbReference>
<dbReference type="InterPro" id="IPR002107">
    <property type="entry name" value="Rotavirus_NSP4"/>
</dbReference>
<dbReference type="Pfam" id="PF01452">
    <property type="entry name" value="Rota_NSP4"/>
    <property type="match status" value="1"/>
</dbReference>
<dbReference type="SUPFAM" id="SSF58030">
    <property type="entry name" value="Rotavirus nonstructural proteins"/>
    <property type="match status" value="1"/>
</dbReference>
<evidence type="ECO:0000255" key="1">
    <source>
        <dbReference type="HAMAP-Rule" id="MF_04091"/>
    </source>
</evidence>
<organismHost>
    <name type="scientific">Homo sapiens</name>
    <name type="common">Human</name>
    <dbReference type="NCBI Taxonomy" id="9606"/>
</organismHost>
<comment type="function">
    <text evidence="1">Plays an essential role in the virus replication cycle by acting as a viroporin. Creates a pore in the host endoplasmic reticulum and as a consequence releases Ca(2+) in the cytoplasm of infected cell. In turn, high levels of cytoplasmic calcium trigger membrane trafficking and transport of viral ER-associated proteins to viroplasms, sites of viral genome replication and immature particle assembly.</text>
</comment>
<comment type="function">
    <text evidence="1">The secreted form acts as an enterotoxin that causes phospholipase C-dependent elevation of the intracellular calcium concentration in host intestinal mucosa cells. Increased concentration of intracellular calcium disrupts the cytoskeleton and the tight junctions, raising the paracellular permeability. Potentiates chloride ion secretion through a calcium ion-dependent signaling pathway, inducing age-dependent diarrhea. To perform this enterotoxigenic role in vivo, NSP4 is released from infected enterocytes in a soluble form capable of diffusing within the intestinal lumen and interacting with host plasma membrane receptors on neighboring epithelial cells such as integrins ITGA1/ITGB1 and ITGA2/ITGB1.</text>
</comment>
<comment type="subunit">
    <text evidence="1">Homotetramer. Interacts with the immature particle in the viroplasm. Interacts with host CAV1, early and late in infection. Interacts with host integrin ITGA1/ITGB1 heterodimer. Interacts with host integrin ITGA2/ITGB1 heterodimer. Interaction with microtubules blocks trafficking to the Golgi apparatus.</text>
</comment>
<comment type="subcellular location">
    <subcellularLocation>
        <location evidence="1">Host rough endoplasmic reticulum membrane</location>
        <topology evidence="1">Single-pass type III membrane protein</topology>
    </subcellularLocation>
    <subcellularLocation>
        <location evidence="1">Host membrane</location>
        <location evidence="1">Host caveola</location>
        <topology evidence="1">Single-pass type III membrane protein</topology>
    </subcellularLocation>
    <subcellularLocation>
        <location evidence="1">Secreted</location>
    </subcellularLocation>
    <text evidence="1">NSP4 also localizes in vesicular structures which contain autophagosomal markers and associate with viroplasms in virus-infected cells. Additionally, a soluble form of glycosylated NSP4 is secreted despite retention of its transmembrane domain.</text>
</comment>
<comment type="domain">
    <text evidence="1">Binds 1 calcium ion per tetramer.</text>
</comment>
<comment type="PTM">
    <text evidence="1">The N-glycosyl content is primarily Man(9)GlcNAc, with a small amount of Man(8)GlcNAc.</text>
</comment>
<comment type="similarity">
    <text evidence="1">Belongs to the rotavirus NSP4 family.</text>
</comment>